<proteinExistence type="inferred from homology"/>
<reference key="1">
    <citation type="journal article" date="2007" name="Genome Res.">
        <title>Reductive evolution and niche adaptation inferred from the genome of Mycobacterium ulcerans, the causative agent of Buruli ulcer.</title>
        <authorList>
            <person name="Stinear T.P."/>
            <person name="Seemann T."/>
            <person name="Pidot S."/>
            <person name="Frigui W."/>
            <person name="Reysset G."/>
            <person name="Garnier T."/>
            <person name="Meurice G."/>
            <person name="Simon D."/>
            <person name="Bouchier C."/>
            <person name="Ma L."/>
            <person name="Tichit M."/>
            <person name="Porter J.L."/>
            <person name="Ryan J."/>
            <person name="Johnson P.D.R."/>
            <person name="Davies J.K."/>
            <person name="Jenkin G.A."/>
            <person name="Small P.L.C."/>
            <person name="Jones L.M."/>
            <person name="Tekaia F."/>
            <person name="Laval F."/>
            <person name="Daffe M."/>
            <person name="Parkhill J."/>
            <person name="Cole S.T."/>
        </authorList>
    </citation>
    <scope>NUCLEOTIDE SEQUENCE [LARGE SCALE GENOMIC DNA]</scope>
    <source>
        <strain>Agy99</strain>
    </source>
</reference>
<keyword id="KW-0963">Cytoplasm</keyword>
<keyword id="KW-0489">Methyltransferase</keyword>
<keyword id="KW-0698">rRNA processing</keyword>
<keyword id="KW-0949">S-adenosyl-L-methionine</keyword>
<keyword id="KW-0808">Transferase</keyword>
<dbReference type="EC" id="2.1.1.199" evidence="1"/>
<dbReference type="EMBL" id="CP000325">
    <property type="protein sequence ID" value="ABL05665.1"/>
    <property type="molecule type" value="Genomic_DNA"/>
</dbReference>
<dbReference type="RefSeq" id="WP_011741271.1">
    <property type="nucleotide sequence ID" value="NC_008611.1"/>
</dbReference>
<dbReference type="SMR" id="A0PTJ6"/>
<dbReference type="KEGG" id="mul:MUL_3510"/>
<dbReference type="eggNOG" id="COG0275">
    <property type="taxonomic scope" value="Bacteria"/>
</dbReference>
<dbReference type="HOGENOM" id="CLU_038422_0_0_11"/>
<dbReference type="Proteomes" id="UP000000765">
    <property type="component" value="Chromosome"/>
</dbReference>
<dbReference type="GO" id="GO:0005737">
    <property type="term" value="C:cytoplasm"/>
    <property type="evidence" value="ECO:0007669"/>
    <property type="project" value="UniProtKB-SubCell"/>
</dbReference>
<dbReference type="GO" id="GO:0071424">
    <property type="term" value="F:rRNA (cytosine-N4-)-methyltransferase activity"/>
    <property type="evidence" value="ECO:0007669"/>
    <property type="project" value="UniProtKB-UniRule"/>
</dbReference>
<dbReference type="GO" id="GO:0070475">
    <property type="term" value="P:rRNA base methylation"/>
    <property type="evidence" value="ECO:0007669"/>
    <property type="project" value="UniProtKB-UniRule"/>
</dbReference>
<dbReference type="FunFam" id="1.10.150.170:FF:000001">
    <property type="entry name" value="Ribosomal RNA small subunit methyltransferase H"/>
    <property type="match status" value="1"/>
</dbReference>
<dbReference type="Gene3D" id="1.10.150.170">
    <property type="entry name" value="Putative methyltransferase TM0872, insert domain"/>
    <property type="match status" value="1"/>
</dbReference>
<dbReference type="Gene3D" id="3.40.50.150">
    <property type="entry name" value="Vaccinia Virus protein VP39"/>
    <property type="match status" value="1"/>
</dbReference>
<dbReference type="HAMAP" id="MF_01007">
    <property type="entry name" value="16SrRNA_methyltr_H"/>
    <property type="match status" value="1"/>
</dbReference>
<dbReference type="InterPro" id="IPR002903">
    <property type="entry name" value="RsmH"/>
</dbReference>
<dbReference type="InterPro" id="IPR023397">
    <property type="entry name" value="SAM-dep_MeTrfase_MraW_recog"/>
</dbReference>
<dbReference type="InterPro" id="IPR029063">
    <property type="entry name" value="SAM-dependent_MTases_sf"/>
</dbReference>
<dbReference type="NCBIfam" id="TIGR00006">
    <property type="entry name" value="16S rRNA (cytosine(1402)-N(4))-methyltransferase RsmH"/>
    <property type="match status" value="1"/>
</dbReference>
<dbReference type="PANTHER" id="PTHR11265:SF0">
    <property type="entry name" value="12S RRNA N4-METHYLCYTIDINE METHYLTRANSFERASE"/>
    <property type="match status" value="1"/>
</dbReference>
<dbReference type="PANTHER" id="PTHR11265">
    <property type="entry name" value="S-ADENOSYL-METHYLTRANSFERASE MRAW"/>
    <property type="match status" value="1"/>
</dbReference>
<dbReference type="Pfam" id="PF01795">
    <property type="entry name" value="Methyltransf_5"/>
    <property type="match status" value="1"/>
</dbReference>
<dbReference type="SUPFAM" id="SSF81799">
    <property type="entry name" value="Putative methyltransferase TM0872, insert domain"/>
    <property type="match status" value="1"/>
</dbReference>
<dbReference type="SUPFAM" id="SSF53335">
    <property type="entry name" value="S-adenosyl-L-methionine-dependent methyltransferases"/>
    <property type="match status" value="1"/>
</dbReference>
<protein>
    <recommendedName>
        <fullName evidence="1">Ribosomal RNA small subunit methyltransferase H</fullName>
        <ecNumber evidence="1">2.1.1.199</ecNumber>
    </recommendedName>
    <alternativeName>
        <fullName evidence="1">16S rRNA m(4)C1402 methyltransferase</fullName>
    </alternativeName>
    <alternativeName>
        <fullName evidence="1">rRNA (cytosine-N(4)-)-methyltransferase RsmH</fullName>
    </alternativeName>
</protein>
<evidence type="ECO:0000255" key="1">
    <source>
        <dbReference type="HAMAP-Rule" id="MF_01007"/>
    </source>
</evidence>
<sequence>MHVRAPWSLPEPTLAYFPNARFVPSDRDLGAGALRLVGEDCPAPTRGGVAVADGPTEPGFNDFHHVPVLAQRCVELLRPALTRHHADGSEAVLVDATIGAGGHAERFLTELPGLRLIGLDRDPSALEIVRTRLARFTDRVTLVHTRYDGLASALTELGYGAAQSIDGALFDLGVSSMQLDQAERGFAYSKDAPLDMRMNPQSALSGADIINTYDEAALADILHRYGEERFARRIAARIIRRRADRPFTTTAELVALLYEAIPAAARRTGGHPAKRTFQALRIAVNDELGSLRSAVPAAMDALAVGGRIVVMAYQSLEDRIVKRVFADAVASRTPVDLPVELPGHGPRFRSLTHGAERADAAEVEHNPRSAPVRLRALQRLELEALPRQGTGKGES</sequence>
<accession>A0PTJ6</accession>
<comment type="function">
    <text evidence="1">Specifically methylates the N4 position of cytidine in position 1402 (C1402) of 16S rRNA.</text>
</comment>
<comment type="catalytic activity">
    <reaction evidence="1">
        <text>cytidine(1402) in 16S rRNA + S-adenosyl-L-methionine = N(4)-methylcytidine(1402) in 16S rRNA + S-adenosyl-L-homocysteine + H(+)</text>
        <dbReference type="Rhea" id="RHEA:42928"/>
        <dbReference type="Rhea" id="RHEA-COMP:10286"/>
        <dbReference type="Rhea" id="RHEA-COMP:10287"/>
        <dbReference type="ChEBI" id="CHEBI:15378"/>
        <dbReference type="ChEBI" id="CHEBI:57856"/>
        <dbReference type="ChEBI" id="CHEBI:59789"/>
        <dbReference type="ChEBI" id="CHEBI:74506"/>
        <dbReference type="ChEBI" id="CHEBI:82748"/>
        <dbReference type="EC" id="2.1.1.199"/>
    </reaction>
</comment>
<comment type="subcellular location">
    <subcellularLocation>
        <location evidence="1">Cytoplasm</location>
    </subcellularLocation>
</comment>
<comment type="similarity">
    <text evidence="1">Belongs to the methyltransferase superfamily. RsmH family.</text>
</comment>
<gene>
    <name evidence="1" type="primary">rsmH</name>
    <name type="synonym">mraW</name>
    <name type="ordered locus">MUL_3510</name>
</gene>
<feature type="chain" id="PRO_0000386996" description="Ribosomal RNA small subunit methyltransferase H">
    <location>
        <begin position="1"/>
        <end position="395"/>
    </location>
</feature>
<feature type="binding site" evidence="1">
    <location>
        <begin position="101"/>
        <end position="103"/>
    </location>
    <ligand>
        <name>S-adenosyl-L-methionine</name>
        <dbReference type="ChEBI" id="CHEBI:59789"/>
    </ligand>
</feature>
<feature type="binding site" evidence="1">
    <location>
        <position position="120"/>
    </location>
    <ligand>
        <name>S-adenosyl-L-methionine</name>
        <dbReference type="ChEBI" id="CHEBI:59789"/>
    </ligand>
</feature>
<feature type="binding site" evidence="1">
    <location>
        <position position="147"/>
    </location>
    <ligand>
        <name>S-adenosyl-L-methionine</name>
        <dbReference type="ChEBI" id="CHEBI:59789"/>
    </ligand>
</feature>
<feature type="binding site" evidence="1">
    <location>
        <position position="171"/>
    </location>
    <ligand>
        <name>S-adenosyl-L-methionine</name>
        <dbReference type="ChEBI" id="CHEBI:59789"/>
    </ligand>
</feature>
<feature type="binding site" evidence="1">
    <location>
        <position position="178"/>
    </location>
    <ligand>
        <name>S-adenosyl-L-methionine</name>
        <dbReference type="ChEBI" id="CHEBI:59789"/>
    </ligand>
</feature>
<organism>
    <name type="scientific">Mycobacterium ulcerans (strain Agy99)</name>
    <dbReference type="NCBI Taxonomy" id="362242"/>
    <lineage>
        <taxon>Bacteria</taxon>
        <taxon>Bacillati</taxon>
        <taxon>Actinomycetota</taxon>
        <taxon>Actinomycetes</taxon>
        <taxon>Mycobacteriales</taxon>
        <taxon>Mycobacteriaceae</taxon>
        <taxon>Mycobacterium</taxon>
        <taxon>Mycobacterium ulcerans group</taxon>
    </lineage>
</organism>
<name>RSMH_MYCUA</name>